<reference key="1">
    <citation type="journal article" date="1993" name="FEBS Lett.">
        <title>ATMPKs: a gene family of plant MAP kinases in Arabidopsis thaliana.</title>
        <authorList>
            <person name="Mizoguchi T."/>
            <person name="Hayashida N."/>
            <person name="Yamaguchi-Shinozaki K."/>
            <person name="Kamada H."/>
            <person name="Shinozaki K."/>
        </authorList>
    </citation>
    <scope>NUCLEOTIDE SEQUENCE [MRNA]</scope>
    <source>
        <strain>cv. Columbia</strain>
    </source>
</reference>
<reference key="2">
    <citation type="journal article" date="2009" name="Genetics">
        <title>Arabidopsis thaliana genes encoding defense signaling and recognition proteins exhibit contrasting evolutionary dynamics.</title>
        <authorList>
            <person name="Caldwell K.S."/>
            <person name="Michelmore R.W."/>
        </authorList>
    </citation>
    <scope>NUCLEOTIDE SEQUENCE [GENOMIC DNA]</scope>
    <scope>VARIANTS GLN-115 AND VAL-293</scope>
    <source>
        <strain>cv. Aa-0</strain>
        <strain>cv. Ak-1</strain>
        <strain>cv. Bay-0</strain>
        <strain>cv. C24</strain>
        <strain>cv. Columbia</strain>
        <strain>cv. Cvi-0</strain>
        <strain>cv. Di-0</strain>
        <strain>cv. Ei-2</strain>
        <strain>cv. Gu-0</strain>
        <strain>cv. HOG</strain>
        <strain>cv. Landsberg erecta</strain>
        <strain>cv. Lz-0</strain>
        <strain>cv. N13 Konchezero</strain>
        <strain>cv. Nd-1</strain>
        <strain>cv. Sha</strain>
        <strain>cv. Sorbo</strain>
        <strain>cv. Tsu-0</strain>
        <strain>cv. Wassilewskija</strain>
        <strain>cv. Wei-0</strain>
        <strain>cv. Yo-0</strain>
    </source>
</reference>
<reference key="3">
    <citation type="submission" date="2005-06" db="EMBL/GenBank/DDBJ databases">
        <title>MAP kinase 4 genomic sequence from Arabidopsis thaliana.</title>
        <authorList>
            <person name="Sharma P.K."/>
            <person name="Kumar R."/>
            <person name="Garg G.K."/>
            <person name="Khan G."/>
        </authorList>
    </citation>
    <scope>NUCLEOTIDE SEQUENCE [GENOMIC DNA]</scope>
</reference>
<reference key="4">
    <citation type="journal article" date="1999" name="Nature">
        <title>Sequence and analysis of chromosome 4 of the plant Arabidopsis thaliana.</title>
        <authorList>
            <person name="Mayer K.F.X."/>
            <person name="Schueller C."/>
            <person name="Wambutt R."/>
            <person name="Murphy G."/>
            <person name="Volckaert G."/>
            <person name="Pohl T."/>
            <person name="Duesterhoeft A."/>
            <person name="Stiekema W."/>
            <person name="Entian K.-D."/>
            <person name="Terryn N."/>
            <person name="Harris B."/>
            <person name="Ansorge W."/>
            <person name="Brandt P."/>
            <person name="Grivell L.A."/>
            <person name="Rieger M."/>
            <person name="Weichselgartner M."/>
            <person name="de Simone V."/>
            <person name="Obermaier B."/>
            <person name="Mache R."/>
            <person name="Mueller M."/>
            <person name="Kreis M."/>
            <person name="Delseny M."/>
            <person name="Puigdomenech P."/>
            <person name="Watson M."/>
            <person name="Schmidtheini T."/>
            <person name="Reichert B."/>
            <person name="Portetelle D."/>
            <person name="Perez-Alonso M."/>
            <person name="Boutry M."/>
            <person name="Bancroft I."/>
            <person name="Vos P."/>
            <person name="Hoheisel J."/>
            <person name="Zimmermann W."/>
            <person name="Wedler H."/>
            <person name="Ridley P."/>
            <person name="Langham S.-A."/>
            <person name="McCullagh B."/>
            <person name="Bilham L."/>
            <person name="Robben J."/>
            <person name="van der Schueren J."/>
            <person name="Grymonprez B."/>
            <person name="Chuang Y.-J."/>
            <person name="Vandenbussche F."/>
            <person name="Braeken M."/>
            <person name="Weltjens I."/>
            <person name="Voet M."/>
            <person name="Bastiaens I."/>
            <person name="Aert R."/>
            <person name="Defoor E."/>
            <person name="Weitzenegger T."/>
            <person name="Bothe G."/>
            <person name="Ramsperger U."/>
            <person name="Hilbert H."/>
            <person name="Braun M."/>
            <person name="Holzer E."/>
            <person name="Brandt A."/>
            <person name="Peters S."/>
            <person name="van Staveren M."/>
            <person name="Dirkse W."/>
            <person name="Mooijman P."/>
            <person name="Klein Lankhorst R."/>
            <person name="Rose M."/>
            <person name="Hauf J."/>
            <person name="Koetter P."/>
            <person name="Berneiser S."/>
            <person name="Hempel S."/>
            <person name="Feldpausch M."/>
            <person name="Lamberth S."/>
            <person name="Van den Daele H."/>
            <person name="De Keyser A."/>
            <person name="Buysshaert C."/>
            <person name="Gielen J."/>
            <person name="Villarroel R."/>
            <person name="De Clercq R."/>
            <person name="van Montagu M."/>
            <person name="Rogers J."/>
            <person name="Cronin A."/>
            <person name="Quail M.A."/>
            <person name="Bray-Allen S."/>
            <person name="Clark L."/>
            <person name="Doggett J."/>
            <person name="Hall S."/>
            <person name="Kay M."/>
            <person name="Lennard N."/>
            <person name="McLay K."/>
            <person name="Mayes R."/>
            <person name="Pettett A."/>
            <person name="Rajandream M.A."/>
            <person name="Lyne M."/>
            <person name="Benes V."/>
            <person name="Rechmann S."/>
            <person name="Borkova D."/>
            <person name="Bloecker H."/>
            <person name="Scharfe M."/>
            <person name="Grimm M."/>
            <person name="Loehnert T.-H."/>
            <person name="Dose S."/>
            <person name="de Haan M."/>
            <person name="Maarse A.C."/>
            <person name="Schaefer M."/>
            <person name="Mueller-Auer S."/>
            <person name="Gabel C."/>
            <person name="Fuchs M."/>
            <person name="Fartmann B."/>
            <person name="Granderath K."/>
            <person name="Dauner D."/>
            <person name="Herzl A."/>
            <person name="Neumann S."/>
            <person name="Argiriou A."/>
            <person name="Vitale D."/>
            <person name="Liguori R."/>
            <person name="Piravandi E."/>
            <person name="Massenet O."/>
            <person name="Quigley F."/>
            <person name="Clabauld G."/>
            <person name="Muendlein A."/>
            <person name="Felber R."/>
            <person name="Schnabl S."/>
            <person name="Hiller R."/>
            <person name="Schmidt W."/>
            <person name="Lecharny A."/>
            <person name="Aubourg S."/>
            <person name="Chefdor F."/>
            <person name="Cooke R."/>
            <person name="Berger C."/>
            <person name="Monfort A."/>
            <person name="Casacuberta E."/>
            <person name="Gibbons T."/>
            <person name="Weber N."/>
            <person name="Vandenbol M."/>
            <person name="Bargues M."/>
            <person name="Terol J."/>
            <person name="Torres A."/>
            <person name="Perez-Perez A."/>
            <person name="Purnelle B."/>
            <person name="Bent E."/>
            <person name="Johnson S."/>
            <person name="Tacon D."/>
            <person name="Jesse T."/>
            <person name="Heijnen L."/>
            <person name="Schwarz S."/>
            <person name="Scholler P."/>
            <person name="Heber S."/>
            <person name="Francs P."/>
            <person name="Bielke C."/>
            <person name="Frishman D."/>
            <person name="Haase D."/>
            <person name="Lemcke K."/>
            <person name="Mewes H.-W."/>
            <person name="Stocker S."/>
            <person name="Zaccaria P."/>
            <person name="Bevan M."/>
            <person name="Wilson R.K."/>
            <person name="de la Bastide M."/>
            <person name="Habermann K."/>
            <person name="Parnell L."/>
            <person name="Dedhia N."/>
            <person name="Gnoj L."/>
            <person name="Schutz K."/>
            <person name="Huang E."/>
            <person name="Spiegel L."/>
            <person name="Sekhon M."/>
            <person name="Murray J."/>
            <person name="Sheet P."/>
            <person name="Cordes M."/>
            <person name="Abu-Threideh J."/>
            <person name="Stoneking T."/>
            <person name="Kalicki J."/>
            <person name="Graves T."/>
            <person name="Harmon G."/>
            <person name="Edwards J."/>
            <person name="Latreille P."/>
            <person name="Courtney L."/>
            <person name="Cloud J."/>
            <person name="Abbott A."/>
            <person name="Scott K."/>
            <person name="Johnson D."/>
            <person name="Minx P."/>
            <person name="Bentley D."/>
            <person name="Fulton B."/>
            <person name="Miller N."/>
            <person name="Greco T."/>
            <person name="Kemp K."/>
            <person name="Kramer J."/>
            <person name="Fulton L."/>
            <person name="Mardis E."/>
            <person name="Dante M."/>
            <person name="Pepin K."/>
            <person name="Hillier L.W."/>
            <person name="Nelson J."/>
            <person name="Spieth J."/>
            <person name="Ryan E."/>
            <person name="Andrews S."/>
            <person name="Geisel C."/>
            <person name="Layman D."/>
            <person name="Du H."/>
            <person name="Ali J."/>
            <person name="Berghoff A."/>
            <person name="Jones K."/>
            <person name="Drone K."/>
            <person name="Cotton M."/>
            <person name="Joshu C."/>
            <person name="Antonoiu B."/>
            <person name="Zidanic M."/>
            <person name="Strong C."/>
            <person name="Sun H."/>
            <person name="Lamar B."/>
            <person name="Yordan C."/>
            <person name="Ma P."/>
            <person name="Zhong J."/>
            <person name="Preston R."/>
            <person name="Vil D."/>
            <person name="Shekher M."/>
            <person name="Matero A."/>
            <person name="Shah R."/>
            <person name="Swaby I.K."/>
            <person name="O'Shaughnessy A."/>
            <person name="Rodriguez M."/>
            <person name="Hoffman J."/>
            <person name="Till S."/>
            <person name="Granat S."/>
            <person name="Shohdy N."/>
            <person name="Hasegawa A."/>
            <person name="Hameed A."/>
            <person name="Lodhi M."/>
            <person name="Johnson A."/>
            <person name="Chen E."/>
            <person name="Marra M.A."/>
            <person name="Martienssen R."/>
            <person name="McCombie W.R."/>
        </authorList>
    </citation>
    <scope>NUCLEOTIDE SEQUENCE [LARGE SCALE GENOMIC DNA]</scope>
    <source>
        <strain>cv. Columbia</strain>
    </source>
</reference>
<reference key="5">
    <citation type="journal article" date="2017" name="Plant J.">
        <title>Araport11: a complete reannotation of the Arabidopsis thaliana reference genome.</title>
        <authorList>
            <person name="Cheng C.Y."/>
            <person name="Krishnakumar V."/>
            <person name="Chan A.P."/>
            <person name="Thibaud-Nissen F."/>
            <person name="Schobel S."/>
            <person name="Town C.D."/>
        </authorList>
    </citation>
    <scope>GENOME REANNOTATION</scope>
    <source>
        <strain>cv. Columbia</strain>
    </source>
</reference>
<reference key="6">
    <citation type="journal article" date="2003" name="Science">
        <title>Empirical analysis of transcriptional activity in the Arabidopsis genome.</title>
        <authorList>
            <person name="Yamada K."/>
            <person name="Lim J."/>
            <person name="Dale J.M."/>
            <person name="Chen H."/>
            <person name="Shinn P."/>
            <person name="Palm C.J."/>
            <person name="Southwick A.M."/>
            <person name="Wu H.C."/>
            <person name="Kim C.J."/>
            <person name="Nguyen M."/>
            <person name="Pham P.K."/>
            <person name="Cheuk R.F."/>
            <person name="Karlin-Newmann G."/>
            <person name="Liu S.X."/>
            <person name="Lam B."/>
            <person name="Sakano H."/>
            <person name="Wu T."/>
            <person name="Yu G."/>
            <person name="Miranda M."/>
            <person name="Quach H.L."/>
            <person name="Tripp M."/>
            <person name="Chang C.H."/>
            <person name="Lee J.M."/>
            <person name="Toriumi M.J."/>
            <person name="Chan M.M."/>
            <person name="Tang C.C."/>
            <person name="Onodera C.S."/>
            <person name="Deng J.M."/>
            <person name="Akiyama K."/>
            <person name="Ansari Y."/>
            <person name="Arakawa T."/>
            <person name="Banh J."/>
            <person name="Banno F."/>
            <person name="Bowser L."/>
            <person name="Brooks S.Y."/>
            <person name="Carninci P."/>
            <person name="Chao Q."/>
            <person name="Choy N."/>
            <person name="Enju A."/>
            <person name="Goldsmith A.D."/>
            <person name="Gurjal M."/>
            <person name="Hansen N.F."/>
            <person name="Hayashizaki Y."/>
            <person name="Johnson-Hopson C."/>
            <person name="Hsuan V.W."/>
            <person name="Iida K."/>
            <person name="Karnes M."/>
            <person name="Khan S."/>
            <person name="Koesema E."/>
            <person name="Ishida J."/>
            <person name="Jiang P.X."/>
            <person name="Jones T."/>
            <person name="Kawai J."/>
            <person name="Kamiya A."/>
            <person name="Meyers C."/>
            <person name="Nakajima M."/>
            <person name="Narusaka M."/>
            <person name="Seki M."/>
            <person name="Sakurai T."/>
            <person name="Satou M."/>
            <person name="Tamse R."/>
            <person name="Vaysberg M."/>
            <person name="Wallender E.K."/>
            <person name="Wong C."/>
            <person name="Yamamura Y."/>
            <person name="Yuan S."/>
            <person name="Shinozaki K."/>
            <person name="Davis R.W."/>
            <person name="Theologis A."/>
            <person name="Ecker J.R."/>
        </authorList>
    </citation>
    <scope>NUCLEOTIDE SEQUENCE [LARGE SCALE MRNA]</scope>
    <source>
        <strain>cv. Columbia</strain>
    </source>
</reference>
<reference key="7">
    <citation type="submission" date="2002-03" db="EMBL/GenBank/DDBJ databases">
        <title>Full-length cDNA from Arabidopsis thaliana.</title>
        <authorList>
            <person name="Brover V.V."/>
            <person name="Troukhan M.E."/>
            <person name="Alexandrov N.A."/>
            <person name="Lu Y.-P."/>
            <person name="Flavell R.B."/>
            <person name="Feldmann K.A."/>
        </authorList>
    </citation>
    <scope>NUCLEOTIDE SEQUENCE [LARGE SCALE MRNA]</scope>
</reference>
<reference key="8">
    <citation type="journal article" date="1998" name="Biochem. Biophys. Res. Commun.">
        <title>Isolation of ATMEKK1 (a MAP kinase kinase kinase)-interacting proteins and analysis of a MAP kinase cascade in Arabidopsis.</title>
        <authorList>
            <person name="Ichimura K."/>
            <person name="Mizoguchi T."/>
            <person name="Irie K."/>
            <person name="Morris P.C."/>
            <person name="Giraudat J."/>
            <person name="Matsumoto K."/>
            <person name="Shinozaki K."/>
        </authorList>
    </citation>
    <scope>SUBUNIT</scope>
    <scope>INTERACTION WITH MEKK1; MKK1 AND MKK2</scope>
</reference>
<reference key="9">
    <citation type="journal article" date="1998" name="Plant J.">
        <title>Identification of a dual-specificity protein phosphatase that inactivates a MAP kinase from Arabidopsis.</title>
        <authorList>
            <person name="Gupta R."/>
            <person name="Huang Y."/>
            <person name="Kieber J."/>
            <person name="Luan S."/>
        </authorList>
    </citation>
    <scope>ACTIVITY REGULATION</scope>
    <scope>DEPHOSPHORYLATION</scope>
    <scope>CATALYTIC ACTIVITY</scope>
    <source>
        <strain>cv. Columbia</strain>
    </source>
</reference>
<reference key="10">
    <citation type="journal article" date="2000" name="Cell">
        <title>Arabidopsis MAP kinase 4 negatively regulates systemic acquired resistance.</title>
        <authorList>
            <person name="Petersen M."/>
            <person name="Brodersen P."/>
            <person name="Naested H."/>
            <person name="Andreasson E."/>
            <person name="Lindhart U."/>
            <person name="Johansen B."/>
            <person name="Nielsen H.B."/>
            <person name="Lacy M."/>
            <person name="Austin M.J."/>
            <person name="Parker J.E."/>
            <person name="Sharma S.B."/>
            <person name="Klessig D.F."/>
            <person name="Martienssen R."/>
            <person name="Mattsson O."/>
            <person name="Jensen A.B."/>
            <person name="Mundy J."/>
        </authorList>
    </citation>
    <scope>FUNCTION</scope>
    <scope>TISSUE SPECIFICITY</scope>
    <scope>MUTAGENESIS OF THR-201 AND TYR-203</scope>
</reference>
<reference key="11">
    <citation type="journal article" date="2000" name="Plant J.">
        <title>Various abiotic stresses rapidly activate Arabidopsis MAP kinases ATMPK4 and ATMPK6.</title>
        <authorList>
            <person name="Ichimura K."/>
            <person name="Mizoguchi T."/>
            <person name="Yoshida R."/>
            <person name="Yuasa T."/>
            <person name="Shinozaki K."/>
        </authorList>
    </citation>
    <scope>ACTIVITY REGULATION</scope>
    <scope>PHOSPHORYLATION AT THR-201 AND TYR-203</scope>
</reference>
<reference key="12">
    <citation type="journal article" date="2000" name="Plant Physiol.">
        <title>ATMPK4, an Arabidopsis homolog of mitogen-activated protein kinase, is activated in vitro by AtMEK1 through threonine phosphorylation.</title>
        <authorList>
            <person name="Huang Y."/>
            <person name="Li H."/>
            <person name="Gupta R."/>
            <person name="Morris P.C."/>
            <person name="Luan S."/>
            <person name="Kieber J.J."/>
        </authorList>
    </citation>
    <scope>ACTIVITY REGULATION</scope>
    <scope>PHOSPHORYLATION</scope>
    <scope>MUTAGENESIS OF ASP-187</scope>
    <scope>CATALYTIC ACTIVITY</scope>
</reference>
<reference key="13">
    <citation type="journal article" date="2001" name="Plant Physiol.">
        <title>Harpin induces activation of the Arabidopsis mitogen-activated protein kinases AtMPK4 and AtMPK6.</title>
        <authorList>
            <person name="Desikan R."/>
            <person name="Hancock J.T."/>
            <person name="Ichimura K."/>
            <person name="Shinozaki K."/>
            <person name="Neill S.J."/>
        </authorList>
    </citation>
    <scope>ACTIVITY REGULATION</scope>
</reference>
<reference key="14">
    <citation type="journal article" date="2002" name="Plant J.">
        <title>Activation of AtMEK1, an Arabidopsis mitogen-activated protein kinase kinase, in vitro and in vivo: analysis of active mutants expressed in E. coli and generation of the active form in stress response in seedlings.</title>
        <authorList>
            <person name="Matsuoka D."/>
            <person name="Nanmori T."/>
            <person name="Sato K."/>
            <person name="Fukami Y."/>
            <person name="Kikkawa U."/>
            <person name="Yasuda T."/>
        </authorList>
    </citation>
    <scope>ACTIVITY REGULATION</scope>
</reference>
<reference key="15">
    <citation type="journal article" date="2002" name="Trends Plant Sci.">
        <title>Mitogen-activated protein kinase cascades in plants: a new nomenclature.</title>
        <authorList>
            <consortium name="MAPK group"/>
        </authorList>
    </citation>
    <scope>GENE FAMILY</scope>
    <scope>NOMENCLATURE</scope>
</reference>
<reference key="16">
    <citation type="journal article" date="2004" name="FEBS Lett.">
        <title>Involvement of MPK4 in osmotic stress response pathways in cell suspensions and plantlets of Arabidopsis thaliana: activation by hypoosmolarity and negative role in hyperosmolarity tolerance.</title>
        <authorList>
            <person name="Droillard M.-J."/>
            <person name="Boudsocq M."/>
            <person name="Barbier-Brygoo H."/>
            <person name="Lauriere C."/>
        </authorList>
    </citation>
    <scope>FUNCTION</scope>
    <scope>ACTIVITY REGULATION</scope>
</reference>
<reference key="17">
    <citation type="journal article" date="2004" name="Mol. Cell">
        <title>The MKK2 pathway mediates cold and salt stress signaling in Arabidopsis.</title>
        <authorList>
            <person name="Teige M."/>
            <person name="Scheikl E."/>
            <person name="Eulgem T."/>
            <person name="Doczi R."/>
            <person name="Ichimura K."/>
            <person name="Shinozaki K."/>
            <person name="Dangl J.L."/>
            <person name="Hirt H."/>
        </authorList>
    </citation>
    <scope>FUNCTION</scope>
    <scope>ACTIVITY REGULATION</scope>
    <scope>INTERACTION WITH MKK2</scope>
</reference>
<reference key="18">
    <citation type="journal article" date="2005" name="EMBO J.">
        <title>The MAP kinase substrate MKS1 is a regulator of plant defense responses.</title>
        <authorList>
            <person name="Andreasson E."/>
            <person name="Jenkins T."/>
            <person name="Brodersen P."/>
            <person name="Thorgrimsen S."/>
            <person name="Petersen N.H.T."/>
            <person name="Zhu S."/>
            <person name="Qiu J.-L."/>
            <person name="Micheelsen P."/>
            <person name="Rocher A."/>
            <person name="Petersen M."/>
            <person name="Newman M.-A."/>
            <person name="Bjoern Nielsen H."/>
            <person name="Hirt H."/>
            <person name="Somssich I.E."/>
            <person name="Mattsson O."/>
            <person name="Mundy J."/>
        </authorList>
    </citation>
    <scope>FUNCTION</scope>
    <scope>SUBCELLULAR LOCATION</scope>
    <scope>INTERACTION WITH MKS1</scope>
</reference>
<reference key="19">
    <citation type="journal article" date="2006" name="Trends Plant Sci.">
        <title>Ancient signals: comparative genomics of plant MAPK and MAPKK gene families.</title>
        <authorList>
            <person name="Hamel L.P."/>
            <person name="Nicole M.C."/>
            <person name="Sritubtim S."/>
            <person name="Morency M.J."/>
            <person name="Ellis M."/>
            <person name="Ehlting J."/>
            <person name="Beaudoin N."/>
            <person name="Barbazuk B."/>
            <person name="Klessig D."/>
            <person name="Lee J."/>
            <person name="Martin G."/>
            <person name="Mundy J."/>
            <person name="Ohashi Y."/>
            <person name="Scheel D."/>
            <person name="Sheen J."/>
            <person name="Xing T."/>
            <person name="Zhang S."/>
            <person name="Seguin A."/>
            <person name="Ellis B.E."/>
        </authorList>
    </citation>
    <scope>GENE FAMILY</scope>
</reference>
<reference key="20">
    <citation type="journal article" date="2007" name="Mol. Plant Microbe Interact.">
        <title>The MAP kinase kinase MKK2 affects disease resistance in Arabidopsis.</title>
        <authorList>
            <person name="Brader G."/>
            <person name="Djamei A."/>
            <person name="Teige M."/>
            <person name="Palva E.T."/>
            <person name="Hirt H."/>
        </authorList>
    </citation>
    <scope>ACTIVITY REGULATION</scope>
</reference>
<reference key="21">
    <citation type="journal article" date="2007" name="Plant Cell">
        <title>The PP2C-type phosphatase AP2C1, which negatively regulates MPK4 and MPK6, modulates innate immunity, jasmonic acid, and ethylene levels in Arabidopsis.</title>
        <authorList>
            <person name="Schweighofer A."/>
            <person name="Kazanaviciute V."/>
            <person name="Scheikl E."/>
            <person name="Teige M."/>
            <person name="Doczi R."/>
            <person name="Hirt H."/>
            <person name="Schwanninger M."/>
            <person name="Kant M."/>
            <person name="Schuurink R."/>
            <person name="Mauch F."/>
            <person name="Buchala A."/>
            <person name="Cardinale F."/>
            <person name="Meskiene I."/>
        </authorList>
    </citation>
    <scope>ACTIVITY REGULATION</scope>
    <scope>INTERACTION WITH AP2C1</scope>
</reference>
<reference key="22">
    <citation type="journal article" date="2008" name="Cell Res.">
        <title>MEKK1, MKK1/MKK2 and MPK4 function together in a mitogen-activated protein kinase cascade to regulate innate immunity in plants.</title>
        <authorList>
            <person name="Gao M."/>
            <person name="Liu J."/>
            <person name="Bi D."/>
            <person name="Zhang Z."/>
            <person name="Cheng F."/>
            <person name="Chen S."/>
            <person name="Zhang Y."/>
        </authorList>
    </citation>
    <scope>FUNCTION</scope>
    <scope>INTERACTION WITH MEKK1; MKK1 AND MKK2</scope>
    <scope>DISRUPTION PHENOTYPE</scope>
</reference>
<reference key="23">
    <citation type="journal article" date="2008" name="Plant Signal. Behav.">
        <title>Comprehensive analysis of protein-protein interactions between Arabidopsis MAPKs and MAPK kinases helps define potential MAPK signalling modules.</title>
        <authorList>
            <person name="Lee J.S."/>
            <person name="Huh K.W."/>
            <person name="Bhargava A."/>
            <person name="Ellis B.E."/>
        </authorList>
    </citation>
    <scope>INTERACTION WITH MKK1; MKK2 AND MKK6</scope>
</reference>
<reference key="24">
    <citation type="journal article" date="2010" name="Plant Cell">
        <title>Arabidopsis homologs of nucleus- and phragmoplast-localized kinase 2 and 3 and mitogen-activated protein kinase 4 are essential for microtubule organization.</title>
        <authorList>
            <person name="Beck M."/>
            <person name="Komis G."/>
            <person name="Mueller J."/>
            <person name="Menzel D."/>
            <person name="Samaj J."/>
        </authorList>
    </citation>
    <scope>FUNCTION</scope>
    <scope>INTERACTION WITH MAP65-1</scope>
    <scope>DISRUPTION PHENOTYPE</scope>
    <scope>TISSUE SPECIFICITY</scope>
    <scope>DEVELOPMENTAL STAGE</scope>
</reference>
<reference key="25">
    <citation type="journal article" date="2010" name="Plant Cell">
        <title>The MAP kinase MPK4 is required for cytokinesis in Arabidopsis thaliana.</title>
        <authorList>
            <person name="Kosetsu K."/>
            <person name="Matsunaga S."/>
            <person name="Nakagami H."/>
            <person name="Colcombet J."/>
            <person name="Sasabe M."/>
            <person name="Soyano T."/>
            <person name="Takahashi Y."/>
            <person name="Hirt H."/>
            <person name="Machida Y."/>
        </authorList>
    </citation>
    <scope>FUNCTION</scope>
    <scope>DISRUPTION PHENOTYPE</scope>
    <scope>SUBCELLULAR LOCATION</scope>
    <scope>ACTIVITY REGULATION</scope>
</reference>
<reference key="26">
    <citation type="journal article" date="2010" name="Plant Cell Physiol.">
        <title>HINKEL kinesin, ANP MAPKKKs and MKK6/ANQ MAPKK, which phosphorylates and activates MPK4 MAPK, constitute a pathway that is required for cytokinesis in Arabidopsis thaliana.</title>
        <authorList>
            <person name="Takahashi Y."/>
            <person name="Soyano T."/>
            <person name="Kosetsu K."/>
            <person name="Sasabe M."/>
            <person name="Machida Y."/>
        </authorList>
    </citation>
    <scope>FUNCTION</scope>
    <scope>ACTIVITY REGULATION</scope>
    <scope>PHOSPHORYLATION BY MKK6</scope>
    <scope>INTERACTION WITH MKK6</scope>
</reference>
<reference key="27">
    <citation type="journal article" date="2011" name="Plant J.">
        <title>AtMPK4 is required for male-specific meiotic cytokinesis in Arabidopsis.</title>
        <authorList>
            <person name="Zeng Q."/>
            <person name="Chen J.G."/>
            <person name="Ellis B.E."/>
        </authorList>
    </citation>
    <scope>FUNCTION</scope>
    <scope>DISRUPTION PHENOTYPE</scope>
    <scope>ACTIVITY REGULATION</scope>
    <scope>INTERACTION WITH MKK1 AND MKK6</scope>
    <scope>TISSUE SPECIFICITY</scope>
</reference>
<reference key="28">
    <citation type="journal article" date="2012" name="Plant Cell">
        <title>The MEKK1-MKK1/MKK2-MPK4 kinase cascade negatively regulates immunity mediated by a mitogen-activated protein kinase kinase kinase in Arabidopsis.</title>
        <authorList>
            <person name="Kong Q."/>
            <person name="Qu N."/>
            <person name="Gao M."/>
            <person name="Zhang Z."/>
            <person name="Ding X."/>
            <person name="Yang F."/>
            <person name="Li Y."/>
            <person name="Dong O.X."/>
            <person name="Chen S."/>
            <person name="Li X."/>
            <person name="Zhang Y."/>
        </authorList>
    </citation>
    <scope>FUNCTION</scope>
    <scope>INTERACTION WITH MEKK2</scope>
</reference>
<reference key="29">
    <citation type="journal article" date="2015" name="EMBO J.">
        <title>The mRNA decay factor PAT1 functions in a pathway including MAP kinase 4 and immune receptor SUMM2.</title>
        <authorList>
            <person name="Roux M.E."/>
            <person name="Rasmussen M.W."/>
            <person name="Palma K."/>
            <person name="Lolle S."/>
            <person name="Regue A.M."/>
            <person name="Bethke G."/>
            <person name="Glazebrook J."/>
            <person name="Zhang W."/>
            <person name="Sieburth L."/>
            <person name="Larsen M.R."/>
            <person name="Mundy J."/>
            <person name="Petersen M."/>
        </authorList>
    </citation>
    <scope>INTERACTION WITH PAT1</scope>
</reference>
<reference key="30">
    <citation type="journal article" date="2015" name="Nature">
        <title>Pathogen-secreted proteases activate a novel plant immune pathway.</title>
        <authorList>
            <person name="Cheng Z."/>
            <person name="Li J.F."/>
            <person name="Niu Y."/>
            <person name="Zhang X.C."/>
            <person name="Woody O.Z."/>
            <person name="Xiong Y."/>
            <person name="Djonovic S."/>
            <person name="Millet Y."/>
            <person name="Bush J."/>
            <person name="McConkey B.J."/>
            <person name="Sheen J."/>
            <person name="Ausubel F.M."/>
        </authorList>
    </citation>
    <scope>LACK OF INTERACTION WITH RACK1A; RACK1B OR RACK1C</scope>
</reference>
<reference key="31">
    <citation type="journal article" date="2015" name="Plant Cell">
        <title>Phosphorylation of trihelix transcriptional repressor ASR3 by MAP KINASE4 negatively regulates Arabidopsis immunity.</title>
        <authorList>
            <person name="Li B."/>
            <person name="Jiang S."/>
            <person name="Yu X."/>
            <person name="Cheng C."/>
            <person name="Chen S."/>
            <person name="Cheng Y."/>
            <person name="Yuan J.S."/>
            <person name="Jiang D."/>
            <person name="He P."/>
            <person name="Shan L."/>
        </authorList>
    </citation>
    <scope>FUNCTION</scope>
    <scope>INTERACTION WITH ASR3</scope>
    <source>
        <strain>cv. Columbia</strain>
    </source>
</reference>
<reference key="32">
    <citation type="journal article" date="2016" name="Plant Cell">
        <title>A dominant mutation in the HT1 kinase uncovers roles of MAP kinases and GHR1 in CO2-induced stomatal closure.</title>
        <authorList>
            <person name="Horak H."/>
            <person name="Sierla M."/>
            <person name="Toldsepp K."/>
            <person name="Wang C."/>
            <person name="Wang Y.-S."/>
            <person name="Nuhkat M."/>
            <person name="Valk E."/>
            <person name="Pechter P."/>
            <person name="Merilo E."/>
            <person name="Salojaervi J."/>
            <person name="Overmyer K."/>
            <person name="Loog M."/>
            <person name="Brosche M."/>
            <person name="Schroeder J.I."/>
            <person name="Kangasjaervi J."/>
            <person name="Kollist H."/>
        </authorList>
    </citation>
    <scope>FUNCTION</scope>
    <scope>DISRUPTION PHENOTYPE</scope>
    <scope>INTERACTION WITH HT1</scope>
    <source>
        <strain>cv. Columbia</strain>
    </source>
</reference>
<reference key="33">
    <citation type="journal article" date="2016" name="PLoS Biol.">
        <title>Natural variation in Arabidopsis Cvi-0 accession reveals an important role of MPK12 in guard cell CO2 signaling.</title>
        <authorList>
            <person name="Jakobson L."/>
            <person name="Vaahtera L."/>
            <person name="Toldsepp K."/>
            <person name="Nuhkat M."/>
            <person name="Wang C."/>
            <person name="Wang Y.S."/>
            <person name="Horak H."/>
            <person name="Valk E."/>
            <person name="Pechter P."/>
            <person name="Sindarovska Y."/>
            <person name="Tang J."/>
            <person name="Xiao C."/>
            <person name="Xu Y."/>
            <person name="Gerst Talas U."/>
            <person name="Garcia-Sosa A.T."/>
            <person name="Kangasjaervi S."/>
            <person name="Maran U."/>
            <person name="Remm M."/>
            <person name="Roelfsema M.R."/>
            <person name="Hu H."/>
            <person name="Kangasjaervi J."/>
            <person name="Loog M."/>
            <person name="Schroeder J.I."/>
            <person name="Kollist H."/>
            <person name="Brosche M."/>
        </authorList>
    </citation>
    <scope>FUNCTION</scope>
    <scope>MUTAGENESIS OF GLY-55</scope>
    <source>
        <strain>cv. Columbia</strain>
        <strain>cv. Cvi-0</strain>
    </source>
</reference>
<proteinExistence type="evidence at protein level"/>
<feature type="chain" id="PRO_0000186313" description="Mitogen-activated protein kinase 4">
    <location>
        <begin position="1"/>
        <end position="376"/>
    </location>
</feature>
<feature type="domain" description="Protein kinase" evidence="1">
    <location>
        <begin position="43"/>
        <end position="329"/>
    </location>
</feature>
<feature type="short sequence motif" description="TXY">
    <location>
        <begin position="201"/>
        <end position="203"/>
    </location>
</feature>
<feature type="active site" description="Proton acceptor" evidence="1 2">
    <location>
        <position position="169"/>
    </location>
</feature>
<feature type="binding site" evidence="1">
    <location>
        <begin position="49"/>
        <end position="57"/>
    </location>
    <ligand>
        <name>ATP</name>
        <dbReference type="ChEBI" id="CHEBI:30616"/>
    </ligand>
</feature>
<feature type="binding site" evidence="1">
    <location>
        <position position="72"/>
    </location>
    <ligand>
        <name>ATP</name>
        <dbReference type="ChEBI" id="CHEBI:30616"/>
    </ligand>
</feature>
<feature type="modified residue" description="Phosphothreonine" evidence="5">
    <location>
        <position position="201"/>
    </location>
</feature>
<feature type="modified residue" description="Phosphotyrosine" evidence="5">
    <location>
        <position position="203"/>
    </location>
</feature>
<feature type="sequence variant" description="In strain: cv. C24, cv. Lz-0, cv. Wei-0, cv. Yo-0." evidence="15">
    <original>E</original>
    <variation>Q</variation>
    <location>
        <position position="115"/>
    </location>
</feature>
<feature type="sequence variant" description="In strain: cv. Ak-1, cv. Bay-0, cv. Di-0, cv. Landsberg erecta, cv. Tsu-0, cv. Wei-0." evidence="15">
    <original>A</original>
    <variation>V</variation>
    <location>
        <position position="293"/>
    </location>
</feature>
<feature type="mutagenesis site" description="Altered inhibition of HT1 activity." evidence="26">
    <original>G</original>
    <variation>R</variation>
    <location>
        <position position="55"/>
    </location>
</feature>
<feature type="mutagenesis site" description="Loss of kinase activity." evidence="4">
    <original>D</original>
    <variation>A</variation>
    <location>
        <position position="187"/>
    </location>
</feature>
<feature type="mutagenesis site" description="Loss of kinase activity; when associated with Y-203." evidence="6">
    <original>T</original>
    <variation>A</variation>
    <location>
        <position position="201"/>
    </location>
</feature>
<feature type="mutagenesis site" description="Loss of kinase activity; when associated with T-201." evidence="6">
    <original>Y</original>
    <variation>F</variation>
    <location>
        <position position="203"/>
    </location>
</feature>
<feature type="sequence conflict" description="In Ref. 1; BAA04867." evidence="29" ref="1">
    <original>D</original>
    <variation>E</variation>
    <location>
        <position position="313"/>
    </location>
</feature>
<feature type="strand" evidence="31">
    <location>
        <begin position="19"/>
        <end position="21"/>
    </location>
</feature>
<feature type="helix" evidence="31">
    <location>
        <begin position="22"/>
        <end position="24"/>
    </location>
</feature>
<feature type="strand" evidence="31">
    <location>
        <begin position="26"/>
        <end position="31"/>
    </location>
</feature>
<feature type="strand" evidence="31">
    <location>
        <begin position="34"/>
        <end position="39"/>
    </location>
</feature>
<feature type="strand" evidence="31">
    <location>
        <begin position="42"/>
        <end position="51"/>
    </location>
</feature>
<feature type="strand" evidence="31">
    <location>
        <begin position="53"/>
        <end position="62"/>
    </location>
</feature>
<feature type="turn" evidence="31">
    <location>
        <begin position="63"/>
        <end position="66"/>
    </location>
</feature>
<feature type="strand" evidence="31">
    <location>
        <begin position="67"/>
        <end position="74"/>
    </location>
</feature>
<feature type="turn" evidence="31">
    <location>
        <begin position="75"/>
        <end position="78"/>
    </location>
</feature>
<feature type="helix" evidence="31">
    <location>
        <begin position="81"/>
        <end position="96"/>
    </location>
</feature>
<feature type="strand" evidence="31">
    <location>
        <begin position="105"/>
        <end position="108"/>
    </location>
</feature>
<feature type="helix" evidence="31">
    <location>
        <begin position="114"/>
        <end position="116"/>
    </location>
</feature>
<feature type="strand" evidence="31">
    <location>
        <begin position="120"/>
        <end position="125"/>
    </location>
</feature>
<feature type="strand" evidence="31">
    <location>
        <begin position="128"/>
        <end position="130"/>
    </location>
</feature>
<feature type="helix" evidence="31">
    <location>
        <begin position="131"/>
        <end position="136"/>
    </location>
</feature>
<feature type="strand" evidence="31">
    <location>
        <begin position="137"/>
        <end position="139"/>
    </location>
</feature>
<feature type="helix" evidence="31">
    <location>
        <begin position="143"/>
        <end position="162"/>
    </location>
</feature>
<feature type="helix" evidence="31">
    <location>
        <begin position="172"/>
        <end position="174"/>
    </location>
</feature>
<feature type="strand" evidence="31">
    <location>
        <begin position="175"/>
        <end position="177"/>
    </location>
</feature>
<feature type="strand" evidence="31">
    <location>
        <begin position="183"/>
        <end position="185"/>
    </location>
</feature>
<feature type="helix" evidence="31">
    <location>
        <begin position="212"/>
        <end position="215"/>
    </location>
</feature>
<feature type="helix" evidence="31">
    <location>
        <begin position="224"/>
        <end position="239"/>
    </location>
</feature>
<feature type="helix" evidence="31">
    <location>
        <begin position="249"/>
        <end position="260"/>
    </location>
</feature>
<feature type="turn" evidence="31">
    <location>
        <begin position="265"/>
        <end position="270"/>
    </location>
</feature>
<feature type="helix" evidence="31">
    <location>
        <begin position="274"/>
        <end position="282"/>
    </location>
</feature>
<feature type="helix" evidence="31">
    <location>
        <begin position="291"/>
        <end position="294"/>
    </location>
</feature>
<feature type="helix" evidence="31">
    <location>
        <begin position="300"/>
        <end position="309"/>
    </location>
</feature>
<feature type="helix" evidence="31">
    <location>
        <begin position="314"/>
        <end position="316"/>
    </location>
</feature>
<feature type="helix" evidence="31">
    <location>
        <begin position="320"/>
        <end position="324"/>
    </location>
</feature>
<feature type="helix" evidence="31">
    <location>
        <begin position="327"/>
        <end position="329"/>
    </location>
</feature>
<feature type="turn" evidence="31">
    <location>
        <begin position="330"/>
        <end position="332"/>
    </location>
</feature>
<feature type="helix" evidence="31">
    <location>
        <begin position="335"/>
        <end position="337"/>
    </location>
</feature>
<feature type="helix" evidence="31">
    <location>
        <begin position="356"/>
        <end position="370"/>
    </location>
</feature>
<organism>
    <name type="scientific">Arabidopsis thaliana</name>
    <name type="common">Mouse-ear cress</name>
    <dbReference type="NCBI Taxonomy" id="3702"/>
    <lineage>
        <taxon>Eukaryota</taxon>
        <taxon>Viridiplantae</taxon>
        <taxon>Streptophyta</taxon>
        <taxon>Embryophyta</taxon>
        <taxon>Tracheophyta</taxon>
        <taxon>Spermatophyta</taxon>
        <taxon>Magnoliopsida</taxon>
        <taxon>eudicotyledons</taxon>
        <taxon>Gunneridae</taxon>
        <taxon>Pentapetalae</taxon>
        <taxon>rosids</taxon>
        <taxon>malvids</taxon>
        <taxon>Brassicales</taxon>
        <taxon>Brassicaceae</taxon>
        <taxon>Camelineae</taxon>
        <taxon>Arabidopsis</taxon>
    </lineage>
</organism>
<protein>
    <recommendedName>
        <fullName evidence="28">Mitogen-activated protein kinase 4</fullName>
        <shortName evidence="28">AtMPK4</shortName>
        <shortName evidence="28">MAP kinase 4</shortName>
        <ecNumber evidence="3 4">2.7.11.24</ecNumber>
    </recommendedName>
</protein>
<evidence type="ECO:0000255" key="1">
    <source>
        <dbReference type="PROSITE-ProRule" id="PRU00159"/>
    </source>
</evidence>
<evidence type="ECO:0000255" key="2">
    <source>
        <dbReference type="PROSITE-ProRule" id="PRU10027"/>
    </source>
</evidence>
<evidence type="ECO:0000269" key="3">
    <source>
    </source>
</evidence>
<evidence type="ECO:0000269" key="4">
    <source>
    </source>
</evidence>
<evidence type="ECO:0000269" key="5">
    <source>
    </source>
</evidence>
<evidence type="ECO:0000269" key="6">
    <source>
    </source>
</evidence>
<evidence type="ECO:0000269" key="7">
    <source>
    </source>
</evidence>
<evidence type="ECO:0000269" key="8">
    <source>
    </source>
</evidence>
<evidence type="ECO:0000269" key="9">
    <source>
    </source>
</evidence>
<evidence type="ECO:0000269" key="10">
    <source>
    </source>
</evidence>
<evidence type="ECO:0000269" key="11">
    <source>
    </source>
</evidence>
<evidence type="ECO:0000269" key="12">
    <source>
    </source>
</evidence>
<evidence type="ECO:0000269" key="13">
    <source>
    </source>
</evidence>
<evidence type="ECO:0000269" key="14">
    <source>
    </source>
</evidence>
<evidence type="ECO:0000269" key="15">
    <source>
    </source>
</evidence>
<evidence type="ECO:0000269" key="16">
    <source>
    </source>
</evidence>
<evidence type="ECO:0000269" key="17">
    <source>
    </source>
</evidence>
<evidence type="ECO:0000269" key="18">
    <source>
    </source>
</evidence>
<evidence type="ECO:0000269" key="19">
    <source>
    </source>
</evidence>
<evidence type="ECO:0000269" key="20">
    <source>
    </source>
</evidence>
<evidence type="ECO:0000269" key="21">
    <source>
    </source>
</evidence>
<evidence type="ECO:0000269" key="22">
    <source>
    </source>
</evidence>
<evidence type="ECO:0000269" key="23">
    <source>
    </source>
</evidence>
<evidence type="ECO:0000269" key="24">
    <source>
    </source>
</evidence>
<evidence type="ECO:0000269" key="25">
    <source>
    </source>
</evidence>
<evidence type="ECO:0000269" key="26">
    <source>
    </source>
</evidence>
<evidence type="ECO:0000269" key="27">
    <source>
    </source>
</evidence>
<evidence type="ECO:0000303" key="28">
    <source>
    </source>
</evidence>
<evidence type="ECO:0000305" key="29"/>
<evidence type="ECO:0000312" key="30">
    <source>
        <dbReference type="Araport" id="AT4G01370"/>
    </source>
</evidence>
<evidence type="ECO:0007829" key="31">
    <source>
        <dbReference type="PDB" id="7W5C"/>
    </source>
</evidence>
<keyword id="KW-0002">3D-structure</keyword>
<keyword id="KW-0067">ATP-binding</keyword>
<keyword id="KW-0963">Cytoplasm</keyword>
<keyword id="KW-0206">Cytoskeleton</keyword>
<keyword id="KW-0391">Immunity</keyword>
<keyword id="KW-0399">Innate immunity</keyword>
<keyword id="KW-0418">Kinase</keyword>
<keyword id="KW-0493">Microtubule</keyword>
<keyword id="KW-0547">Nucleotide-binding</keyword>
<keyword id="KW-0539">Nucleus</keyword>
<keyword id="KW-0597">Phosphoprotein</keyword>
<keyword id="KW-0611">Plant defense</keyword>
<keyword id="KW-1185">Reference proteome</keyword>
<keyword id="KW-0723">Serine/threonine-protein kinase</keyword>
<keyword id="KW-0346">Stress response</keyword>
<keyword id="KW-0808">Transferase</keyword>
<sequence>MSAESCFGSSGDQSSSKGVATHGGSYVQYNVYGNLFEVSRKYVPPLRPIGRGAYGIVCAATNSETGEEVAIKKIGNAFDNIIDAKRTLREIKLLKHMDHENVIAVKDIIKPPQRENFNDVYIVYELMDTDLHQIIRSNQPLTDDHCRFFLYQLLRGLKYVHSANVLHRDLKPSNLLLNANCDLKLGDFGLARTKSETDFMTEYVVTRWYRAPELLLNCSEYTAAIDIWSVGCILGETMTREPLFPGKDYVHQLRLITELIGSPDDSSLGFLRSDNARRYVRQLPQYPRQNFAARFPNMSAGAVDLLEKMLVFDPSRRITVDEALCHPYLAPLHDINEEPVCVRPFNFDFEQPTLTEENIKELIYRETVKFNPQDSV</sequence>
<comment type="function">
    <text evidence="6 9 10 11 14 17 18 19 20 21 24 25 26">The ANPs-MKK6-MPK4 module is involved in the regulation of plant cytokinesis during meiosis and mitosis. Essential to promote the progression of cytokinesis and for cellularization (formation of the cell plate) during male-specific meiosis. Involved in cortical microtubules organization and stabilization by regulating the phosphorylation state of microtubule-associated proteins such as MAP65-1. Involved in root hair development process. Negative regulator of systemic acquired resistance (SAR) and salicylic acid- (SA) mediated defense response. Required for jasmonic acid- (JA) mediated defense gene expression. May regulate activity of transcription factor controlling pathogenesis-related (PR) gene expression. Seems to act independently of the SAR regulatory protein NPR1 (Nonexpresser of PR1). Phosphorylates MKS1 and transcription factors WRKY25 and WRKY33. The MEKK1, MKK1/MKK2 and MPK4 function in a signaling pathway that modulates the expression of genes responding to biotic and abiotic stresses and also plays an important role in pathogen defense by negatively regulating innate immunity (PubMed:11163186, PubMed:15225555, PubMed:15358537, PubMed:15990873, PubMed:18982020, PubMed:20215588, PubMed:20802223, PubMed:21098735, PubMed:21575092, PubMed:25770109). Phosphorylates MEKK2 upon treatment with flg22 (PubMed:22643122). Involved in stomatal movement regulation by repressing HT1 and HT1-mediated GHR1 phosphorylation (PubMed:27694184, PubMed:27923039).</text>
</comment>
<comment type="catalytic activity">
    <reaction evidence="3 4">
        <text>L-seryl-[protein] + ATP = O-phospho-L-seryl-[protein] + ADP + H(+)</text>
        <dbReference type="Rhea" id="RHEA:17989"/>
        <dbReference type="Rhea" id="RHEA-COMP:9863"/>
        <dbReference type="Rhea" id="RHEA-COMP:11604"/>
        <dbReference type="ChEBI" id="CHEBI:15378"/>
        <dbReference type="ChEBI" id="CHEBI:29999"/>
        <dbReference type="ChEBI" id="CHEBI:30616"/>
        <dbReference type="ChEBI" id="CHEBI:83421"/>
        <dbReference type="ChEBI" id="CHEBI:456216"/>
        <dbReference type="EC" id="2.7.11.24"/>
    </reaction>
</comment>
<comment type="catalytic activity">
    <reaction evidence="3 4">
        <text>L-threonyl-[protein] + ATP = O-phospho-L-threonyl-[protein] + ADP + H(+)</text>
        <dbReference type="Rhea" id="RHEA:46608"/>
        <dbReference type="Rhea" id="RHEA-COMP:11060"/>
        <dbReference type="Rhea" id="RHEA-COMP:11605"/>
        <dbReference type="ChEBI" id="CHEBI:15378"/>
        <dbReference type="ChEBI" id="CHEBI:30013"/>
        <dbReference type="ChEBI" id="CHEBI:30616"/>
        <dbReference type="ChEBI" id="CHEBI:61977"/>
        <dbReference type="ChEBI" id="CHEBI:456216"/>
        <dbReference type="EC" id="2.7.11.24"/>
    </reaction>
</comment>
<comment type="activity regulation">
    <text evidence="3 4 5 7 8 9 10 12 13 18 19 20">Activated by threonine and tyrosine phosphorylation. Activated by the MAP kinase kinases MKK1 and MKK2. Activated in response to touch, wounding, low temperature, low humidity, salt stress and the bacterial elicitors flagellin and harpin. Activated upon Pseudomonas syringae pv. tomato DC3000 infection. Repressed by the protein phosphatase 2C AP2C1. Repressed by DSPTP1-mediated dephosphorylation. Activated by the MAP kinase kinase MKK6 in vitro.</text>
</comment>
<comment type="subunit">
    <text evidence="9 11 13 14 16 17 18 20 21 22 23 24 25 27">Interacts with MEKK1, MKK1, MKK2 and MKK6. May form a ternary complex composed of MEKK1 and MKK1/MKK2 and MPK4. Interacts with MKS1 and AP2C1. May form a ternary or larger complex with MKS1 and WRKY25 and/or WRKY33. Interacts with MAP65-1 (PubMed:15225555, PubMed:15990873, PubMed:17630279, PubMed:18982020, PubMed:19513235, PubMed:20215588, PubMed:20802223, PubMed:21575092, PubMed:9878570). No interactions with RACK1A, RACK1B or RACK1C (PubMed:25731164). Interacts directly with ASR3 and mediates its phosphorylation (PubMed:25770109). Binds to MEKK2 (PubMed:22643122). Interacts with PAT1 (PubMed:25603932). Binds to HT1 (PubMed:27694184).</text>
</comment>
<comment type="interaction">
    <interactant intactId="EBI-994375">
        <id>Q39024</id>
    </interactant>
    <interactant intactId="EBI-16897073">
        <id>O80871</id>
        <label>At2g30020</label>
    </interactant>
    <organismsDiffer>false</organismsDiffer>
    <experiments>3</experiments>
</comment>
<comment type="interaction">
    <interactant intactId="EBI-994375">
        <id>Q39024</id>
    </interactant>
    <interactant intactId="EBI-25510874">
        <id>Q84JD1</id>
        <label>At5g07260</label>
    </interactant>
    <organismsDiffer>false</organismsDiffer>
    <experiments>3</experiments>
</comment>
<comment type="interaction">
    <interactant intactId="EBI-994375">
        <id>Q39024</id>
    </interactant>
    <interactant intactId="EBI-25518229">
        <id>A0A178UJ48</id>
        <label>AXX17_At5g14090</label>
    </interactant>
    <organismsDiffer>false</organismsDiffer>
    <experiments>3</experiments>
</comment>
<comment type="interaction">
    <interactant intactId="EBI-994375">
        <id>Q39024</id>
    </interactant>
    <interactant intactId="EBI-6271434">
        <id>O81472</id>
        <label>MEKK2</label>
    </interactant>
    <organismsDiffer>false</organismsDiffer>
    <experiments>3</experiments>
</comment>
<comment type="interaction">
    <interactant intactId="EBI-994375">
        <id>Q39024</id>
    </interactant>
    <interactant intactId="EBI-994464">
        <id>Q94A06</id>
        <label>MKK1</label>
    </interactant>
    <organismsDiffer>false</organismsDiffer>
    <experiments>11</experiments>
</comment>
<comment type="interaction">
    <interactant intactId="EBI-994375">
        <id>Q39024</id>
    </interactant>
    <interactant intactId="EBI-994350">
        <id>Q9S7U9</id>
        <label>MKK2</label>
    </interactant>
    <organismsDiffer>false</organismsDiffer>
    <experiments>10</experiments>
</comment>
<comment type="interaction">
    <interactant intactId="EBI-994375">
        <id>Q39024</id>
    </interactant>
    <interactant intactId="EBI-1238868">
        <id>Q9FJV0</id>
        <label>MKK6</label>
    </interactant>
    <organismsDiffer>false</organismsDiffer>
    <experiments>4</experiments>
</comment>
<comment type="interaction">
    <interactant intactId="EBI-994375">
        <id>Q39024</id>
    </interactant>
    <interactant intactId="EBI-1392198">
        <id>Q8LGD5</id>
        <label>MKS1</label>
    </interactant>
    <organismsDiffer>false</organismsDiffer>
    <experiments>9</experiments>
</comment>
<comment type="interaction">
    <interactant intactId="EBI-994375">
        <id>Q39024</id>
    </interactant>
    <interactant intactId="EBI-1392386">
        <id>O22921</id>
        <label>WRKY25</label>
    </interactant>
    <organismsDiffer>false</organismsDiffer>
    <experiments>2</experiments>
</comment>
<comment type="interaction">
    <interactant intactId="EBI-994375">
        <id>Q39024</id>
    </interactant>
    <interactant intactId="EBI-1392374">
        <id>Q8S8P5</id>
        <label>WRKY33</label>
    </interactant>
    <organismsDiffer>false</organismsDiffer>
    <experiments>2</experiments>
</comment>
<comment type="subcellular location">
    <subcellularLocation>
        <location>Cytoplasm</location>
    </subcellularLocation>
    <subcellularLocation>
        <location>Nucleus</location>
    </subcellularLocation>
    <subcellularLocation>
        <location>Cytoplasm</location>
        <location>Cytoskeleton</location>
    </subcellularLocation>
    <text evidence="29">Translocated into the nucleus in response to phosphorylation (Probable). Localized to the cell plate.</text>
</comment>
<comment type="tissue specificity">
    <text evidence="6 17 20">Ubiquitous. Expressed in the veins and stomatal guard cells of leaf plates, petioles, stem, roots and flowers.</text>
</comment>
<comment type="developmental stage">
    <text evidence="17">Observed in root epidermal cells and root hairs, especially in the root hair formation zone. During root hair development, both observed in root hair bulges and in young outgrowing root hairs.</text>
</comment>
<comment type="domain">
    <text>The TXY motif contains the threonine and tyrosine residues whose phosphorylation activates the MAP kinases.</text>
</comment>
<comment type="PTM">
    <text evidence="4 5 18">Dually phosphorylated on Thr-201 and Tyr-203, which activates the enzyme. Autophosphorylated on serine and tyrosine residues. Dephosphorylated by DSPTP1. Phosphorylated by MKK6 in vitro.</text>
</comment>
<comment type="disruption phenotype">
    <text evidence="14 17 19 20 25">Dwarf plants with cytokinetic defects in leaf epidermal cells. Abnormally developed and branched root hairs. Retarded root growth with the protrusion of many epidermal cells from roots. Heavily bundled and disoriented cortical microtubules resistant to oryzalin. Exhibits a seedling-lethality phenotype. Defects in the formation of the cell plate. Abnormal mature pollen grains. Abolished CO(2)-mediated stomatal closure (PubMed:27694184).</text>
</comment>
<comment type="similarity">
    <text evidence="29">Belongs to the protein kinase superfamily. CMGC Ser/Thr protein kinase family. MAP kinase subfamily.</text>
</comment>
<comment type="sequence caution" evidence="29">
    <conflict type="erroneous gene model prediction">
        <sequence resource="EMBL-CDS" id="AAB61033"/>
    </conflict>
</comment>
<name>MPK4_ARATH</name>
<accession>Q39024</accession>
<accession>B2BDE5</accession>
<accession>B2BDE6</accession>
<accession>B2BDE8</accession>
<accession>B2BDG2</accession>
<accession>O04597</accession>
<accession>Q45V20</accession>
<accession>Q9M136</accession>
<gene>
    <name evidence="28" type="primary">MPK4</name>
    <name evidence="30" type="ordered locus">At4g01370</name>
    <name type="ORF">F2N1.1</name>
    <name type="ORF">F2N1_2-t</name>
</gene>
<dbReference type="EC" id="2.7.11.24" evidence="3 4"/>
<dbReference type="EMBL" id="D21840">
    <property type="protein sequence ID" value="BAA04867.1"/>
    <property type="molecule type" value="mRNA"/>
</dbReference>
<dbReference type="EMBL" id="EF470667">
    <property type="protein sequence ID" value="ABR46145.1"/>
    <property type="molecule type" value="Genomic_DNA"/>
</dbReference>
<dbReference type="EMBL" id="EF470668">
    <property type="protein sequence ID" value="ABR46146.1"/>
    <property type="molecule type" value="Genomic_DNA"/>
</dbReference>
<dbReference type="EMBL" id="EF470669">
    <property type="protein sequence ID" value="ABR46147.1"/>
    <property type="molecule type" value="Genomic_DNA"/>
</dbReference>
<dbReference type="EMBL" id="EF470670">
    <property type="protein sequence ID" value="ABR46148.1"/>
    <property type="molecule type" value="Genomic_DNA"/>
</dbReference>
<dbReference type="EMBL" id="EF470671">
    <property type="protein sequence ID" value="ABR46149.1"/>
    <property type="molecule type" value="Genomic_DNA"/>
</dbReference>
<dbReference type="EMBL" id="EF470672">
    <property type="protein sequence ID" value="ABR46150.1"/>
    <property type="molecule type" value="Genomic_DNA"/>
</dbReference>
<dbReference type="EMBL" id="EF470673">
    <property type="protein sequence ID" value="ABR46151.1"/>
    <property type="molecule type" value="Genomic_DNA"/>
</dbReference>
<dbReference type="EMBL" id="EF470674">
    <property type="protein sequence ID" value="ABR46152.1"/>
    <property type="molecule type" value="Genomic_DNA"/>
</dbReference>
<dbReference type="EMBL" id="EF470675">
    <property type="protein sequence ID" value="ABR46153.1"/>
    <property type="molecule type" value="Genomic_DNA"/>
</dbReference>
<dbReference type="EMBL" id="EF470676">
    <property type="protein sequence ID" value="ABR46154.1"/>
    <property type="molecule type" value="Genomic_DNA"/>
</dbReference>
<dbReference type="EMBL" id="EF470677">
    <property type="protein sequence ID" value="ABR46155.1"/>
    <property type="molecule type" value="Genomic_DNA"/>
</dbReference>
<dbReference type="EMBL" id="EF470678">
    <property type="protein sequence ID" value="ABR46156.1"/>
    <property type="molecule type" value="Genomic_DNA"/>
</dbReference>
<dbReference type="EMBL" id="EF470679">
    <property type="protein sequence ID" value="ABR46157.1"/>
    <property type="molecule type" value="Genomic_DNA"/>
</dbReference>
<dbReference type="EMBL" id="EF470680">
    <property type="protein sequence ID" value="ABR46158.1"/>
    <property type="molecule type" value="Genomic_DNA"/>
</dbReference>
<dbReference type="EMBL" id="EF470681">
    <property type="protein sequence ID" value="ABR46159.1"/>
    <property type="molecule type" value="Genomic_DNA"/>
</dbReference>
<dbReference type="EMBL" id="EF470682">
    <property type="protein sequence ID" value="ABR46160.1"/>
    <property type="molecule type" value="Genomic_DNA"/>
</dbReference>
<dbReference type="EMBL" id="EF470683">
    <property type="protein sequence ID" value="ABR46161.1"/>
    <property type="molecule type" value="Genomic_DNA"/>
</dbReference>
<dbReference type="EMBL" id="EF470684">
    <property type="protein sequence ID" value="ABR46162.1"/>
    <property type="molecule type" value="Genomic_DNA"/>
</dbReference>
<dbReference type="EMBL" id="EF470685">
    <property type="protein sequence ID" value="ABR46163.1"/>
    <property type="molecule type" value="Genomic_DNA"/>
</dbReference>
<dbReference type="EMBL" id="EF470686">
    <property type="protein sequence ID" value="ABR46164.1"/>
    <property type="molecule type" value="Genomic_DNA"/>
</dbReference>
<dbReference type="EMBL" id="DQ112072">
    <property type="protein sequence ID" value="AAZ20637.1"/>
    <property type="molecule type" value="Genomic_DNA"/>
</dbReference>
<dbReference type="EMBL" id="AF007269">
    <property type="protein sequence ID" value="AAB61033.1"/>
    <property type="status" value="ALT_SEQ"/>
    <property type="molecule type" value="Genomic_DNA"/>
</dbReference>
<dbReference type="EMBL" id="AL161491">
    <property type="protein sequence ID" value="CAB80946.1"/>
    <property type="molecule type" value="Genomic_DNA"/>
</dbReference>
<dbReference type="EMBL" id="CP002687">
    <property type="protein sequence ID" value="AEE82016.1"/>
    <property type="molecule type" value="Genomic_DNA"/>
</dbReference>
<dbReference type="EMBL" id="AF360231">
    <property type="protein sequence ID" value="AAK25941.1"/>
    <property type="molecule type" value="mRNA"/>
</dbReference>
<dbReference type="EMBL" id="AY040031">
    <property type="protein sequence ID" value="AAK64089.1"/>
    <property type="molecule type" value="mRNA"/>
</dbReference>
<dbReference type="EMBL" id="AY088537">
    <property type="protein sequence ID" value="AAM66070.1"/>
    <property type="molecule type" value="mRNA"/>
</dbReference>
<dbReference type="PIR" id="S40470">
    <property type="entry name" value="S40470"/>
</dbReference>
<dbReference type="RefSeq" id="NP_192046.1">
    <property type="nucleotide sequence ID" value="NM_116367.3"/>
</dbReference>
<dbReference type="PDB" id="7W5C">
    <property type="method" value="X-ray"/>
    <property type="resolution" value="2.20 A"/>
    <property type="chains" value="A=18-372"/>
</dbReference>
<dbReference type="PDBsum" id="7W5C"/>
<dbReference type="SMR" id="Q39024"/>
<dbReference type="BioGRID" id="13440">
    <property type="interactions" value="168"/>
</dbReference>
<dbReference type="FunCoup" id="Q39024">
    <property type="interactions" value="3944"/>
</dbReference>
<dbReference type="IntAct" id="Q39024">
    <property type="interactions" value="11"/>
</dbReference>
<dbReference type="MINT" id="Q39024"/>
<dbReference type="STRING" id="3702.Q39024"/>
<dbReference type="iPTMnet" id="Q39024"/>
<dbReference type="PaxDb" id="3702-AT4G01370.1"/>
<dbReference type="ProteomicsDB" id="250946"/>
<dbReference type="EnsemblPlants" id="AT4G01370.1">
    <property type="protein sequence ID" value="AT4G01370.1"/>
    <property type="gene ID" value="AT4G01370"/>
</dbReference>
<dbReference type="GeneID" id="828151"/>
<dbReference type="Gramene" id="AT4G01370.1">
    <property type="protein sequence ID" value="AT4G01370.1"/>
    <property type="gene ID" value="AT4G01370"/>
</dbReference>
<dbReference type="KEGG" id="ath:AT4G01370"/>
<dbReference type="Araport" id="AT4G01370"/>
<dbReference type="TAIR" id="AT4G01370">
    <property type="gene designation" value="MPK4"/>
</dbReference>
<dbReference type="eggNOG" id="KOG0660">
    <property type="taxonomic scope" value="Eukaryota"/>
</dbReference>
<dbReference type="HOGENOM" id="CLU_000288_181_1_1"/>
<dbReference type="InParanoid" id="Q39024"/>
<dbReference type="OMA" id="SFFDFDY"/>
<dbReference type="PhylomeDB" id="Q39024"/>
<dbReference type="BRENDA" id="2.7.11.24">
    <property type="organism ID" value="399"/>
</dbReference>
<dbReference type="PRO" id="PR:Q39024"/>
<dbReference type="Proteomes" id="UP000006548">
    <property type="component" value="Chromosome 4"/>
</dbReference>
<dbReference type="ExpressionAtlas" id="Q39024">
    <property type="expression patterns" value="baseline and differential"/>
</dbReference>
<dbReference type="GO" id="GO:0009504">
    <property type="term" value="C:cell plate"/>
    <property type="evidence" value="ECO:0000314"/>
    <property type="project" value="UniProtKB"/>
</dbReference>
<dbReference type="GO" id="GO:0005737">
    <property type="term" value="C:cytoplasm"/>
    <property type="evidence" value="ECO:0000314"/>
    <property type="project" value="UniProtKB"/>
</dbReference>
<dbReference type="GO" id="GO:0005874">
    <property type="term" value="C:microtubule"/>
    <property type="evidence" value="ECO:0007669"/>
    <property type="project" value="UniProtKB-KW"/>
</dbReference>
<dbReference type="GO" id="GO:0005634">
    <property type="term" value="C:nucleus"/>
    <property type="evidence" value="ECO:0000314"/>
    <property type="project" value="UniProtKB"/>
</dbReference>
<dbReference type="GO" id="GO:0005524">
    <property type="term" value="F:ATP binding"/>
    <property type="evidence" value="ECO:0007669"/>
    <property type="project" value="UniProtKB-KW"/>
</dbReference>
<dbReference type="GO" id="GO:0016301">
    <property type="term" value="F:kinase activity"/>
    <property type="evidence" value="ECO:0000314"/>
    <property type="project" value="UniProtKB"/>
</dbReference>
<dbReference type="GO" id="GO:0004707">
    <property type="term" value="F:MAP kinase activity"/>
    <property type="evidence" value="ECO:0000314"/>
    <property type="project" value="TAIR"/>
</dbReference>
<dbReference type="GO" id="GO:0004672">
    <property type="term" value="F:protein kinase activity"/>
    <property type="evidence" value="ECO:0000314"/>
    <property type="project" value="UniProtKB"/>
</dbReference>
<dbReference type="GO" id="GO:0106310">
    <property type="term" value="F:protein serine kinase activity"/>
    <property type="evidence" value="ECO:0007669"/>
    <property type="project" value="RHEA"/>
</dbReference>
<dbReference type="GO" id="GO:0071244">
    <property type="term" value="P:cellular response to carbon dioxide"/>
    <property type="evidence" value="ECO:0000315"/>
    <property type="project" value="UniProtKB"/>
</dbReference>
<dbReference type="GO" id="GO:0043622">
    <property type="term" value="P:cortical microtubule organization"/>
    <property type="evidence" value="ECO:0000315"/>
    <property type="project" value="UniProtKB"/>
</dbReference>
<dbReference type="GO" id="GO:0000911">
    <property type="term" value="P:cytokinesis by cell plate formation"/>
    <property type="evidence" value="ECO:0000315"/>
    <property type="project" value="UniProtKB"/>
</dbReference>
<dbReference type="GO" id="GO:0006972">
    <property type="term" value="P:hyperosmotic response"/>
    <property type="evidence" value="ECO:0000315"/>
    <property type="project" value="TAIR"/>
</dbReference>
<dbReference type="GO" id="GO:0042539">
    <property type="term" value="P:hypotonic salinity response"/>
    <property type="evidence" value="ECO:0000314"/>
    <property type="project" value="TAIR"/>
</dbReference>
<dbReference type="GO" id="GO:0045087">
    <property type="term" value="P:innate immune response"/>
    <property type="evidence" value="ECO:0007669"/>
    <property type="project" value="UniProtKB-KW"/>
</dbReference>
<dbReference type="GO" id="GO:0009861">
    <property type="term" value="P:jasmonic acid and ethylene-dependent systemic resistance"/>
    <property type="evidence" value="ECO:0000315"/>
    <property type="project" value="TAIR"/>
</dbReference>
<dbReference type="GO" id="GO:0009868">
    <property type="term" value="P:jasmonic acid and ethylene-dependent systemic resistance, jasmonic acid mediated signaling pathway"/>
    <property type="evidence" value="ECO:0000304"/>
    <property type="project" value="TAIR"/>
</dbReference>
<dbReference type="GO" id="GO:0007112">
    <property type="term" value="P:male meiosis cytokinesis"/>
    <property type="evidence" value="ECO:0000315"/>
    <property type="project" value="TAIR"/>
</dbReference>
<dbReference type="GO" id="GO:0016310">
    <property type="term" value="P:phosphorylation"/>
    <property type="evidence" value="ECO:0000314"/>
    <property type="project" value="TAIR"/>
</dbReference>
<dbReference type="GO" id="GO:0009555">
    <property type="term" value="P:pollen development"/>
    <property type="evidence" value="ECO:0000315"/>
    <property type="project" value="TAIR"/>
</dbReference>
<dbReference type="GO" id="GO:0006468">
    <property type="term" value="P:protein phosphorylation"/>
    <property type="evidence" value="ECO:0000314"/>
    <property type="project" value="UniProtKB"/>
</dbReference>
<dbReference type="GO" id="GO:0090333">
    <property type="term" value="P:regulation of stomatal closure"/>
    <property type="evidence" value="ECO:0000315"/>
    <property type="project" value="UniProtKB"/>
</dbReference>
<dbReference type="GO" id="GO:0010119">
    <property type="term" value="P:regulation of stomatal movement"/>
    <property type="evidence" value="ECO:0000315"/>
    <property type="project" value="UniProtKB"/>
</dbReference>
<dbReference type="GO" id="GO:0009737">
    <property type="term" value="P:response to abscisic acid"/>
    <property type="evidence" value="ECO:0000270"/>
    <property type="project" value="TAIR"/>
</dbReference>
<dbReference type="GO" id="GO:0009409">
    <property type="term" value="P:response to cold"/>
    <property type="evidence" value="ECO:0000314"/>
    <property type="project" value="TAIR"/>
</dbReference>
<dbReference type="GO" id="GO:0009620">
    <property type="term" value="P:response to fungus"/>
    <property type="evidence" value="ECO:0000315"/>
    <property type="project" value="TAIR"/>
</dbReference>
<dbReference type="GO" id="GO:0009651">
    <property type="term" value="P:response to salt stress"/>
    <property type="evidence" value="ECO:0000314"/>
    <property type="project" value="TAIR"/>
</dbReference>
<dbReference type="GO" id="GO:0009862">
    <property type="term" value="P:systemic acquired resistance, salicylic acid mediated signaling pathway"/>
    <property type="evidence" value="ECO:0000315"/>
    <property type="project" value="TAIR"/>
</dbReference>
<dbReference type="CDD" id="cd07858">
    <property type="entry name" value="STKc_TEY_MAPK"/>
    <property type="match status" value="1"/>
</dbReference>
<dbReference type="FunFam" id="1.10.510.10:FF:000013">
    <property type="entry name" value="Mitogen-activated protein kinase"/>
    <property type="match status" value="1"/>
</dbReference>
<dbReference type="FunFam" id="3.30.200.20:FF:000046">
    <property type="entry name" value="Mitogen-activated protein kinase"/>
    <property type="match status" value="1"/>
</dbReference>
<dbReference type="Gene3D" id="3.30.200.20">
    <property type="entry name" value="Phosphorylase Kinase, domain 1"/>
    <property type="match status" value="1"/>
</dbReference>
<dbReference type="Gene3D" id="1.10.510.10">
    <property type="entry name" value="Transferase(Phosphotransferase) domain 1"/>
    <property type="match status" value="1"/>
</dbReference>
<dbReference type="InterPro" id="IPR011009">
    <property type="entry name" value="Kinase-like_dom_sf"/>
</dbReference>
<dbReference type="InterPro" id="IPR050117">
    <property type="entry name" value="MAP_kinase"/>
</dbReference>
<dbReference type="InterPro" id="IPR003527">
    <property type="entry name" value="MAP_kinase_CS"/>
</dbReference>
<dbReference type="InterPro" id="IPR000719">
    <property type="entry name" value="Prot_kinase_dom"/>
</dbReference>
<dbReference type="InterPro" id="IPR017441">
    <property type="entry name" value="Protein_kinase_ATP_BS"/>
</dbReference>
<dbReference type="InterPro" id="IPR008271">
    <property type="entry name" value="Ser/Thr_kinase_AS"/>
</dbReference>
<dbReference type="PANTHER" id="PTHR24055">
    <property type="entry name" value="MITOGEN-ACTIVATED PROTEIN KINASE"/>
    <property type="match status" value="1"/>
</dbReference>
<dbReference type="Pfam" id="PF00069">
    <property type="entry name" value="Pkinase"/>
    <property type="match status" value="1"/>
</dbReference>
<dbReference type="SMART" id="SM00220">
    <property type="entry name" value="S_TKc"/>
    <property type="match status" value="1"/>
</dbReference>
<dbReference type="SUPFAM" id="SSF56112">
    <property type="entry name" value="Protein kinase-like (PK-like)"/>
    <property type="match status" value="1"/>
</dbReference>
<dbReference type="PROSITE" id="PS01351">
    <property type="entry name" value="MAPK"/>
    <property type="match status" value="1"/>
</dbReference>
<dbReference type="PROSITE" id="PS00107">
    <property type="entry name" value="PROTEIN_KINASE_ATP"/>
    <property type="match status" value="1"/>
</dbReference>
<dbReference type="PROSITE" id="PS50011">
    <property type="entry name" value="PROTEIN_KINASE_DOM"/>
    <property type="match status" value="1"/>
</dbReference>
<dbReference type="PROSITE" id="PS00108">
    <property type="entry name" value="PROTEIN_KINASE_ST"/>
    <property type="match status" value="1"/>
</dbReference>